<accession>Q9TTY5</accession>
<accession>A7Z046</accession>
<evidence type="ECO:0000250" key="1"/>
<evidence type="ECO:0000250" key="2">
    <source>
        <dbReference type="UniProtKB" id="P25105"/>
    </source>
</evidence>
<evidence type="ECO:0000255" key="3"/>
<evidence type="ECO:0000255" key="4">
    <source>
        <dbReference type="PROSITE-ProRule" id="PRU00521"/>
    </source>
</evidence>
<evidence type="ECO:0000269" key="5">
    <source>
    </source>
</evidence>
<evidence type="ECO:0000269" key="6">
    <source>
    </source>
</evidence>
<evidence type="ECO:0000305" key="7"/>
<evidence type="ECO:0000312" key="8">
    <source>
        <dbReference type="EMBL" id="AAF01439.2"/>
    </source>
</evidence>
<evidence type="ECO:0000312" key="9">
    <source>
        <dbReference type="EMBL" id="CAC43290.1"/>
    </source>
</evidence>
<proteinExistence type="evidence at protein level"/>
<gene>
    <name evidence="2" type="primary">PTAFR</name>
    <name type="synonym">PAFR</name>
</gene>
<comment type="function">
    <text evidence="1">Receptor for platelet activating factor, a chemotactic phospholipid mediator that possesses potent inflammatory, smooth-muscle contractile and hypotensive activity. Seems to mediate its action via a G protein that activates a phosphatidylinositol-calcium second messenger system. May be involved in the morphological and physical modifications of the oviduct and uterus during the estrus cycle and early pregnancy (By similarity).</text>
</comment>
<comment type="subunit">
    <text evidence="1">Interacts with ARRB1.</text>
</comment>
<comment type="subcellular location">
    <subcellularLocation>
        <location evidence="6">Cell membrane</location>
        <topology evidence="6">Multi-pass membrane protein</topology>
    </subcellularLocation>
</comment>
<comment type="tissue specificity">
    <text evidence="5 6">Found in oviductal epithelial and stroma cells. Levels in the oviduct are raised at days 2-4 of both pregnancy and of the estrus cycle. In the endometrium, localization is predominantly to the apical borders of glandular and luminal epithelial cells. Expressed at lower levels in endometrial stromal cells. Levels in the endometrium are increased at day 20 of pregnancy (at protein level).</text>
</comment>
<comment type="similarity">
    <text evidence="4">Belongs to the G-protein coupled receptor 1 family.</text>
</comment>
<organism>
    <name type="scientific">Bos taurus</name>
    <name type="common">Bovine</name>
    <dbReference type="NCBI Taxonomy" id="9913"/>
    <lineage>
        <taxon>Eukaryota</taxon>
        <taxon>Metazoa</taxon>
        <taxon>Chordata</taxon>
        <taxon>Craniata</taxon>
        <taxon>Vertebrata</taxon>
        <taxon>Euteleostomi</taxon>
        <taxon>Mammalia</taxon>
        <taxon>Eutheria</taxon>
        <taxon>Laurasiatheria</taxon>
        <taxon>Artiodactyla</taxon>
        <taxon>Ruminantia</taxon>
        <taxon>Pecora</taxon>
        <taxon>Bovidae</taxon>
        <taxon>Bovinae</taxon>
        <taxon>Bos</taxon>
    </lineage>
</organism>
<name>PTAFR_BOVIN</name>
<sequence length="342" mass="39691">MEPNNSFRVDSEFRYTLFPIFYSIVFVLGVIANSYVLWVFARLYPSKKFNEIKIFMVNLTMADLLFLVTLPLWIVYYYNQGDWILPKFLCNLAGCFFFINTYCSVAFLAVITYNRFQAVTRPIKTAQATTRKRGILLSLIIWVSIVGAASYFFVLDSTNREPNKTGSANITRCFEHYEKGSIPVLTIHIFLVFSFFLVFLIILFCNLVIIRTLLTQQVQIQRNAEVKRRALWMVCTVLAVFIICFVPHHLVQLPWTLAELGFQDTDFHQAINDAHQVTLCLLSTNCVLDPIIYCFLTKKFRKHLTEKLYSMRESRKCSRATSETGTEVVMQLKDVPVKSLKY</sequence>
<feature type="chain" id="PRO_0000070089" description="Platelet-activating factor receptor">
    <location>
        <begin position="1"/>
        <end position="342"/>
    </location>
</feature>
<feature type="topological domain" description="Extracellular" evidence="3">
    <location>
        <begin position="1"/>
        <end position="16"/>
    </location>
</feature>
<feature type="transmembrane region" description="Helical; Name=1" evidence="3">
    <location>
        <begin position="17"/>
        <end position="38"/>
    </location>
</feature>
<feature type="topological domain" description="Cytoplasmic" evidence="3">
    <location>
        <begin position="39"/>
        <end position="54"/>
    </location>
</feature>
<feature type="transmembrane region" description="Helical; Name=2" evidence="3">
    <location>
        <begin position="55"/>
        <end position="74"/>
    </location>
</feature>
<feature type="topological domain" description="Extracellular" evidence="3">
    <location>
        <begin position="75"/>
        <end position="91"/>
    </location>
</feature>
<feature type="transmembrane region" description="Helical; Name=3" evidence="3">
    <location>
        <begin position="92"/>
        <end position="113"/>
    </location>
</feature>
<feature type="topological domain" description="Cytoplasmic" evidence="3">
    <location>
        <begin position="114"/>
        <end position="133"/>
    </location>
</feature>
<feature type="transmembrane region" description="Helical; Name=4" evidence="3">
    <location>
        <begin position="134"/>
        <end position="155"/>
    </location>
</feature>
<feature type="topological domain" description="Extracellular" evidence="3">
    <location>
        <begin position="156"/>
        <end position="184"/>
    </location>
</feature>
<feature type="transmembrane region" description="Helical; Name=5" evidence="3">
    <location>
        <begin position="185"/>
        <end position="205"/>
    </location>
</feature>
<feature type="topological domain" description="Cytoplasmic" evidence="3">
    <location>
        <begin position="206"/>
        <end position="233"/>
    </location>
</feature>
<feature type="transmembrane region" description="Helical; Name=6" evidence="3">
    <location>
        <begin position="234"/>
        <end position="254"/>
    </location>
</feature>
<feature type="topological domain" description="Extracellular" evidence="3">
    <location>
        <begin position="255"/>
        <end position="276"/>
    </location>
</feature>
<feature type="transmembrane region" description="Helical; Name=7" evidence="3">
    <location>
        <begin position="277"/>
        <end position="296"/>
    </location>
</feature>
<feature type="topological domain" description="Cytoplasmic" evidence="3">
    <location>
        <begin position="297"/>
        <end position="342"/>
    </location>
</feature>
<feature type="glycosylation site" description="N-linked (GlcNAc...) asparagine" evidence="3">
    <location>
        <position position="4"/>
    </location>
</feature>
<feature type="glycosylation site" description="N-linked (GlcNAc...) asparagine" evidence="3">
    <location>
        <position position="163"/>
    </location>
</feature>
<feature type="glycosylation site" description="N-linked (GlcNAc...) asparagine" evidence="3">
    <location>
        <position position="169"/>
    </location>
</feature>
<feature type="disulfide bond" evidence="2 4">
    <location>
        <begin position="90"/>
        <end position="173"/>
    </location>
</feature>
<reference evidence="8" key="1">
    <citation type="journal article" date="2001" name="DNA Seq.">
        <title>Comparison of the coding sequence of the platelet-activating factor receptor gene in three species.</title>
        <authorList>
            <person name="Yang W."/>
            <person name="Diehl J.R."/>
            <person name="Roudebush W.E."/>
        </authorList>
    </citation>
    <scope>NUCLEOTIDE SEQUENCE [GENOMIC DNA]</scope>
</reference>
<reference evidence="9" key="2">
    <citation type="submission" date="2000-11" db="EMBL/GenBank/DDBJ databases">
        <title>Molecular characterization of bovine platelet-actvating factor receptor transcripts and their detection in different tissues of cattle.</title>
        <authorList>
            <person name="He B."/>
            <person name="Tiemann U."/>
            <person name="Kanitz W."/>
            <person name="Weikard R."/>
            <person name="Laurent P."/>
            <person name="Schwerin M."/>
            <person name="Schmidt P."/>
        </authorList>
    </citation>
    <scope>NUCLEOTIDE SEQUENCE [GENOMIC DNA]</scope>
</reference>
<reference evidence="9" key="3">
    <citation type="submission" date="2007-09" db="EMBL/GenBank/DDBJ databases">
        <authorList>
            <consortium name="NIH - Mammalian Gene Collection (MGC) project"/>
        </authorList>
    </citation>
    <scope>NUCLEOTIDE SEQUENCE [LARGE SCALE MRNA]</scope>
    <source>
        <strain>Hereford</strain>
        <tissue>Hypothalamus</tissue>
    </source>
</reference>
<reference evidence="7" key="4">
    <citation type="journal article" date="2001" name="Domest. Anim. Endocrinol.">
        <title>Fluorometric detection of platelet activating factor receptor in cultured oviductal epithelial and stromal cells and endometrial stromal cells from bovine at different stages of the oestrous cycle and early pregnancy.</title>
        <authorList>
            <person name="Tiemann U."/>
            <person name="Viergutz T."/>
            <person name="Jonas L."/>
            <person name="Wollenhaupt K."/>
            <person name="Pohland R."/>
            <person name="Kanitz W."/>
        </authorList>
    </citation>
    <scope>SUBCELLULAR LOCATION</scope>
    <scope>TISSUE SPECIFICITY</scope>
</reference>
<reference evidence="7" key="5">
    <citation type="journal article" date="2001" name="Prostaglandins Other Lipid Mediat.">
        <title>Platelet-activating factor (PAF)-like activity, localization of PAF receptor (PAF-R) and PAF-acetylhydrolase (PAF-AH) activity in bovine endometrium at different stages of the estrous cycle and early pregnancy.</title>
        <authorList>
            <person name="Tiemann U."/>
            <person name="Tomek W."/>
            <person name="Schneider F."/>
            <person name="Wollenhaupt K."/>
            <person name="Kanitz W."/>
            <person name="Becker F."/>
            <person name="Pohland R."/>
            <person name="Alm H."/>
        </authorList>
    </citation>
    <scope>TISSUE SPECIFICITY</scope>
</reference>
<keyword id="KW-1003">Cell membrane</keyword>
<keyword id="KW-0145">Chemotaxis</keyword>
<keyword id="KW-1015">Disulfide bond</keyword>
<keyword id="KW-0297">G-protein coupled receptor</keyword>
<keyword id="KW-0325">Glycoprotein</keyword>
<keyword id="KW-0472">Membrane</keyword>
<keyword id="KW-0635">Pregnancy</keyword>
<keyword id="KW-0675">Receptor</keyword>
<keyword id="KW-1185">Reference proteome</keyword>
<keyword id="KW-0807">Transducer</keyword>
<keyword id="KW-0812">Transmembrane</keyword>
<keyword id="KW-1133">Transmembrane helix</keyword>
<dbReference type="EMBL" id="AF187321">
    <property type="protein sequence ID" value="AAF01439.2"/>
    <property type="molecule type" value="Genomic_DNA"/>
</dbReference>
<dbReference type="EMBL" id="AJ295321">
    <property type="protein sequence ID" value="CAC43290.1"/>
    <property type="molecule type" value="Genomic_DNA"/>
</dbReference>
<dbReference type="EMBL" id="BC153244">
    <property type="protein sequence ID" value="AAI53245.1"/>
    <property type="molecule type" value="mRNA"/>
</dbReference>
<dbReference type="RefSeq" id="NP_001035628.1">
    <property type="nucleotide sequence ID" value="NM_001040538.1"/>
</dbReference>
<dbReference type="SMR" id="Q9TTY5"/>
<dbReference type="FunCoup" id="Q9TTY5">
    <property type="interactions" value="547"/>
</dbReference>
<dbReference type="STRING" id="9913.ENSBTAP00000038567"/>
<dbReference type="GlyCosmos" id="Q9TTY5">
    <property type="glycosylation" value="3 sites, No reported glycans"/>
</dbReference>
<dbReference type="GlyGen" id="Q9TTY5">
    <property type="glycosylation" value="3 sites"/>
</dbReference>
<dbReference type="PaxDb" id="9913-ENSBTAP00000038567"/>
<dbReference type="GeneID" id="518283"/>
<dbReference type="KEGG" id="bta:518283"/>
<dbReference type="CTD" id="5724"/>
<dbReference type="VEuPathDB" id="HostDB:ENSBTAG00000027051"/>
<dbReference type="eggNOG" id="ENOG502QTQI">
    <property type="taxonomic scope" value="Eukaryota"/>
</dbReference>
<dbReference type="HOGENOM" id="CLU_009579_8_2_1"/>
<dbReference type="InParanoid" id="Q9TTY5"/>
<dbReference type="OMA" id="WNIVIIR"/>
<dbReference type="TreeFam" id="TF350009"/>
<dbReference type="Reactome" id="R-BTA-373076">
    <property type="pathway name" value="Class A/1 (Rhodopsin-like receptors)"/>
</dbReference>
<dbReference type="Reactome" id="R-BTA-416476">
    <property type="pathway name" value="G alpha (q) signalling events"/>
</dbReference>
<dbReference type="Reactome" id="R-BTA-6798695">
    <property type="pathway name" value="Neutrophil degranulation"/>
</dbReference>
<dbReference type="Proteomes" id="UP000009136">
    <property type="component" value="Chromosome 2"/>
</dbReference>
<dbReference type="Bgee" id="ENSBTAG00000027051">
    <property type="expression patterns" value="Expressed in neutrophil and 98 other cell types or tissues"/>
</dbReference>
<dbReference type="GO" id="GO:0016020">
    <property type="term" value="C:membrane"/>
    <property type="evidence" value="ECO:0000303"/>
    <property type="project" value="UniProtKB"/>
</dbReference>
<dbReference type="GO" id="GO:0005886">
    <property type="term" value="C:plasma membrane"/>
    <property type="evidence" value="ECO:0000314"/>
    <property type="project" value="UniProtKB"/>
</dbReference>
<dbReference type="GO" id="GO:0045028">
    <property type="term" value="F:G protein-coupled purinergic nucleotide receptor activity"/>
    <property type="evidence" value="ECO:0000318"/>
    <property type="project" value="GO_Central"/>
</dbReference>
<dbReference type="GO" id="GO:0004992">
    <property type="term" value="F:platelet activating factor receptor activity"/>
    <property type="evidence" value="ECO:0007669"/>
    <property type="project" value="InterPro"/>
</dbReference>
<dbReference type="GO" id="GO:0006935">
    <property type="term" value="P:chemotaxis"/>
    <property type="evidence" value="ECO:0007669"/>
    <property type="project" value="UniProtKB-KW"/>
</dbReference>
<dbReference type="GO" id="GO:0007565">
    <property type="term" value="P:female pregnancy"/>
    <property type="evidence" value="ECO:0000270"/>
    <property type="project" value="UniProtKB"/>
</dbReference>
<dbReference type="GO" id="GO:0007186">
    <property type="term" value="P:G protein-coupled receptor signaling pathway"/>
    <property type="evidence" value="ECO:0000318"/>
    <property type="project" value="GO_Central"/>
</dbReference>
<dbReference type="CDD" id="cd15147">
    <property type="entry name" value="7tmA_PAFR"/>
    <property type="match status" value="1"/>
</dbReference>
<dbReference type="FunFam" id="1.20.1070.10:FF:000204">
    <property type="entry name" value="platelet-activating factor receptor"/>
    <property type="match status" value="1"/>
</dbReference>
<dbReference type="Gene3D" id="1.20.1070.10">
    <property type="entry name" value="Rhodopsin 7-helix transmembrane proteins"/>
    <property type="match status" value="1"/>
</dbReference>
<dbReference type="InterPro" id="IPR000276">
    <property type="entry name" value="GPCR_Rhodpsn"/>
</dbReference>
<dbReference type="InterPro" id="IPR017452">
    <property type="entry name" value="GPCR_Rhodpsn_7TM"/>
</dbReference>
<dbReference type="InterPro" id="IPR002282">
    <property type="entry name" value="PAF_rcpt"/>
</dbReference>
<dbReference type="PANTHER" id="PTHR24233">
    <property type="entry name" value="P2Y PURINOCEPTOR-RELATED G-PROTEIN COUPLED RECEPTOR"/>
    <property type="match status" value="1"/>
</dbReference>
<dbReference type="PANTHER" id="PTHR24233:SF6">
    <property type="entry name" value="PLATELET-ACTIVATING FACTOR RECEPTOR"/>
    <property type="match status" value="1"/>
</dbReference>
<dbReference type="Pfam" id="PF00001">
    <property type="entry name" value="7tm_1"/>
    <property type="match status" value="1"/>
</dbReference>
<dbReference type="PRINTS" id="PR00237">
    <property type="entry name" value="GPCRRHODOPSN"/>
</dbReference>
<dbReference type="PRINTS" id="PR01153">
    <property type="entry name" value="PAFRECEPTOR"/>
</dbReference>
<dbReference type="SUPFAM" id="SSF81321">
    <property type="entry name" value="Family A G protein-coupled receptor-like"/>
    <property type="match status" value="1"/>
</dbReference>
<dbReference type="PROSITE" id="PS00237">
    <property type="entry name" value="G_PROTEIN_RECEP_F1_1"/>
    <property type="match status" value="1"/>
</dbReference>
<dbReference type="PROSITE" id="PS50262">
    <property type="entry name" value="G_PROTEIN_RECEP_F1_2"/>
    <property type="match status" value="1"/>
</dbReference>
<protein>
    <recommendedName>
        <fullName>Platelet-activating factor receptor</fullName>
        <shortName>PAF-R</shortName>
        <shortName>PAFr</shortName>
    </recommendedName>
</protein>